<keyword id="KW-0002">3D-structure</keyword>
<keyword id="KW-0175">Coiled coil</keyword>
<keyword id="KW-1015">Disulfide bond</keyword>
<keyword id="KW-1170">Fusion of virus membrane with host endosomal membrane</keyword>
<keyword id="KW-1168">Fusion of virus membrane with host membrane</keyword>
<keyword id="KW-0325">Glycoprotein</keyword>
<keyword id="KW-1032">Host cell membrane</keyword>
<keyword id="KW-1043">Host membrane</keyword>
<keyword id="KW-0945">Host-virus interaction</keyword>
<keyword id="KW-0449">Lipoprotein</keyword>
<keyword id="KW-0472">Membrane</keyword>
<keyword id="KW-0564">Palmitate</keyword>
<keyword id="KW-0732">Signal</keyword>
<keyword id="KW-0812">Transmembrane</keyword>
<keyword id="KW-1133">Transmembrane helix</keyword>
<keyword id="KW-1161">Viral attachment to host cell</keyword>
<keyword id="KW-0261">Viral envelope protein</keyword>
<keyword id="KW-1162">Viral penetration into host cytoplasm</keyword>
<keyword id="KW-0946">Virion</keyword>
<keyword id="KW-0843">Virulence</keyword>
<keyword id="KW-1160">Virus entry into host cell</keyword>
<reference key="1">
    <citation type="journal article" date="1992" name="J. Gen. Virol.">
        <title>Molecular cloning and expression of a spike protein of neurovirulent murine coronavirus JHMV variant cl-2.</title>
        <authorList>
            <person name="Taguchi F."/>
            <person name="Ikeda T."/>
            <person name="Shida H."/>
        </authorList>
    </citation>
    <scope>NUCLEOTIDE SEQUENCE [MRNA]</scope>
</reference>
<organismHost>
    <name type="scientific">Mus musculus</name>
    <name type="common">Mouse</name>
    <dbReference type="NCBI Taxonomy" id="10090"/>
</organismHost>
<feature type="signal peptide" evidence="2">
    <location>
        <begin position="1"/>
        <end position="13"/>
    </location>
</feature>
<feature type="chain" id="PRO_0000037217" description="Spike glycoprotein">
    <location>
        <begin position="14"/>
        <end position="1376"/>
    </location>
</feature>
<feature type="chain" id="PRO_0000037218" description="Spike protein S1">
    <location>
        <begin position="14"/>
        <end position="769"/>
    </location>
</feature>
<feature type="chain" id="PRO_0000037219" description="Spike protein S2">
    <location>
        <begin position="770"/>
        <end position="1376"/>
    </location>
</feature>
<feature type="chain" id="PRO_0000444085" description="Spike protein S2'" evidence="2">
    <location>
        <begin position="922"/>
        <end position="1376"/>
    </location>
</feature>
<feature type="topological domain" description="Extracellular" evidence="2">
    <location>
        <begin position="14"/>
        <end position="1317"/>
    </location>
</feature>
<feature type="transmembrane region" description="Helical" evidence="2">
    <location>
        <begin position="1318"/>
        <end position="1338"/>
    </location>
</feature>
<feature type="topological domain" description="Cytoplasmic" evidence="2">
    <location>
        <begin position="1339"/>
        <end position="1376"/>
    </location>
</feature>
<feature type="domain" description="BetaCoV S1-NTD" evidence="4">
    <location>
        <begin position="15"/>
        <end position="296"/>
    </location>
</feature>
<feature type="domain" description="BetaCoV S1-CTD" evidence="3">
    <location>
        <begin position="327"/>
        <end position="618"/>
    </location>
</feature>
<feature type="region of interest" description="Receptor binding site">
    <location>
        <begin position="15"/>
        <end position="330"/>
    </location>
</feature>
<feature type="region of interest" description="Fusion peptide 1" evidence="2">
    <location>
        <begin position="922"/>
        <end position="943"/>
    </location>
</feature>
<feature type="region of interest" description="Fusion peptide 2" evidence="2">
    <location>
        <begin position="941"/>
        <end position="961"/>
    </location>
</feature>
<feature type="region of interest" description="Heptad repeat 1" evidence="2">
    <location>
        <begin position="1022"/>
        <end position="1072"/>
    </location>
</feature>
<feature type="region of interest" description="Heptad repeat 2" evidence="2">
    <location>
        <begin position="1266"/>
        <end position="1306"/>
    </location>
</feature>
<feature type="coiled-coil region" evidence="2">
    <location>
        <begin position="1051"/>
        <end position="1095"/>
    </location>
</feature>
<feature type="coiled-coil region" evidence="2">
    <location>
        <begin position="1279"/>
        <end position="1307"/>
    </location>
</feature>
<feature type="short sequence motif" description="KxHxx" evidence="2">
    <location>
        <begin position="1372"/>
        <end position="1376"/>
    </location>
</feature>
<feature type="site" description="Cleavage; by host" evidence="1">
    <location>
        <begin position="769"/>
        <end position="770"/>
    </location>
</feature>
<feature type="site" description="Cleavage" evidence="2">
    <location>
        <begin position="921"/>
        <end position="922"/>
    </location>
</feature>
<feature type="glycosylation site" description="N-linked (GlcNAc...) asparagine; by host" evidence="2">
    <location>
        <position position="31"/>
    </location>
</feature>
<feature type="glycosylation site" description="N-linked (GlcNAc...) asparagine; by host" evidence="2">
    <location>
        <position position="60"/>
    </location>
</feature>
<feature type="glycosylation site" description="N-linked (GlcNAc...) asparagine; by host" evidence="2">
    <location>
        <position position="134"/>
    </location>
</feature>
<feature type="glycosylation site" description="N-linked (GlcNAc...) asparagine; by host" evidence="2">
    <location>
        <position position="192"/>
    </location>
</feature>
<feature type="glycosylation site" description="N-linked (GlcNAc...) asparagine; by host" evidence="2">
    <location>
        <position position="357"/>
    </location>
</feature>
<feature type="glycosylation site" description="N-linked (GlcNAc...) asparagine; by host" evidence="2">
    <location>
        <position position="435"/>
    </location>
</feature>
<feature type="glycosylation site" description="N-linked (GlcNAc...) asparagine; by host" evidence="2">
    <location>
        <position position="677"/>
    </location>
</feature>
<feature type="glycosylation site" description="N-linked (GlcNAc...) asparagine; by host" evidence="2">
    <location>
        <position position="709"/>
    </location>
</feature>
<feature type="glycosylation site" description="N-linked (GlcNAc...) asparagine; by host" evidence="2">
    <location>
        <position position="717"/>
    </location>
</feature>
<feature type="glycosylation site" description="N-linked (GlcNAc...) asparagine; by host" evidence="2">
    <location>
        <position position="789"/>
    </location>
</feature>
<feature type="glycosylation site" description="N-linked (GlcNAc...) asparagine; by host" evidence="2">
    <location>
        <position position="806"/>
    </location>
</feature>
<feature type="glycosylation site" description="N-linked (GlcNAc...) asparagine; by host" evidence="2">
    <location>
        <position position="945"/>
    </location>
</feature>
<feature type="glycosylation site" description="N-linked (GlcNAc...) asparagine; by host" evidence="2">
    <location>
        <position position="1232"/>
    </location>
</feature>
<feature type="glycosylation site" description="N-linked (GlcNAc...) asparagine; by host" evidence="2">
    <location>
        <position position="1242"/>
    </location>
</feature>
<feature type="glycosylation site" description="N-linked (GlcNAc...) asparagine; by host" evidence="2">
    <location>
        <position position="1261"/>
    </location>
</feature>
<feature type="glycosylation site" description="N-linked (GlcNAc...) asparagine; by host" evidence="2">
    <location>
        <position position="1277"/>
    </location>
</feature>
<feature type="glycosylation site" description="N-linked (GlcNAc...) asparagine; by host" evidence="2">
    <location>
        <position position="1298"/>
    </location>
</feature>
<feature type="disulfide bond" evidence="4">
    <location>
        <begin position="21"/>
        <end position="158"/>
    </location>
</feature>
<feature type="disulfide bond" evidence="4">
    <location>
        <begin position="153"/>
        <end position="187"/>
    </location>
</feature>
<feature type="disulfide bond" evidence="4">
    <location>
        <begin position="165"/>
        <end position="246"/>
    </location>
</feature>
<feature type="disulfide bond" evidence="4">
    <location>
        <begin position="284"/>
        <end position="294"/>
    </location>
</feature>
<feature type="disulfide bond" evidence="3">
    <location>
        <begin position="329"/>
        <end position="354"/>
    </location>
</feature>
<feature type="disulfide bond" evidence="3">
    <location>
        <begin position="372"/>
        <end position="425"/>
    </location>
</feature>
<feature type="disulfide bond" evidence="3">
    <location>
        <begin position="384"/>
        <end position="616"/>
    </location>
</feature>
<feature type="disulfide bond" evidence="2">
    <location>
        <begin position="946"/>
        <end position="957"/>
    </location>
</feature>
<sequence>MLFVFILFLPSCLGYIGDFRCIQTVNYNGNNASAPSISTEAVDVSKGLGTYYVLDRVYLNATLLLTGYYPVDGSNYRNLALTGTNTLSLTWFKPPFLSEFNDGIFAKVQNLKTNTPTGATSYFPTIVIGSLFGNTSYTVVLEPYNNIIMASVCTYTICQLPYTPCKPNTNGNRVIGFWHTDVKPPICLLKRNFTFNVNAPWLYFHFYQQGGTFYAYYADKPSATTFLFSVYIGDILTQYFVLPFICTPTAGSTLLPLYWVTPLLKRQYLFNFNEKGVITSAVDCASSYISEIKCKTQSLLPSTGVYDLSGYTVQPVGVVYRRVPNLPDCKIEEWLTAKSVPSPLNWERRTFQNCNFNLSSLLRYVQAESLSCNNIDASKVYGMCFGSVSVDKFAIPRSRQIDLQIGNSGFLQTANYKIDTAATSCQLYYSLPKNNVTINNYNPSSWNRRYGFNDAGVFGKSKHDVAYAQQCFIVRPSYCPCAQPDIVSACTSQTKPMSAYCPTGTIHRECSLWNGPHLRSARVGSGTYTCECTCKPNPFDTYDLRCGQIKTIVNVGDHCEGLGVLEDKCGNSDPHKGCSCAHDSFIGWSHDTCLVNDHSQIFANILLNGINSGTTCSTDLQLPNTEVATGVCVRYDLYGITGQGVFKEVKADYYNSWQALLYDVNGNLNGFRDLTTNKTYTIRSCYSGRVSAAYHKEAPEPALLYRNINCSYVFTNNISREENPLNYFDSYLGCVVNADNRPDEALPNCDLRMGAGLCVDYSKSRRARRSVSTGYRLTTFEPYMPMLVNDSVQSVGGLYEMQIPTNFTIGHHEEFIQIRAPKVTIDCAAFVCGDNAACRQQLVEYGSFCDNVNAILNEVNNLLDNMQLQVASALMQGVTISSRLPDGISGPIDDINFSPLLGCIGSTCAEDGNGPSAMRGRSAIEDLLFDKVKLSDVGFVEAYNNCTGGQEVRDLLCVQSFNGIKVLPPVLSESQISGYTAGATAAAMFPPWTAAAGVPFSLNVQYRINGLGVTMNVLSENQKMIASAFNNALGAIQEGFDATNSALGKIQSVVNANAEALNNLLNQLSNRFGAISASLQEILTRLDRVEAKAQIDRLINGRLTALNAYISKQLSDSTLIKFSAAQAIEKVNECVKSQTTRINFCGNGNHILSLVQNAPYGLCFIHFSYVPTSFKTANVSPGLCISGDRGLAPKAGYFVQDNGEWKFTGSNYYYPEPITDKNSVVMISCAVNYTKAPEVFLNNSIPNLPDFKEELDKWFKNQTSIAPDLSLDFEKLNVTFLDLTYEMNRIQDAIKKLNESYINLKEVGTYEMYVKWPWYVWLLIGLAGVAVCVLLFFICCCTGCGSCCFRKCGSCCDEYGGHQDSIVIYNISAHED</sequence>
<protein>
    <recommendedName>
        <fullName evidence="2">Spike glycoprotein</fullName>
        <shortName evidence="2">S glycoprotein</shortName>
    </recommendedName>
    <alternativeName>
        <fullName evidence="2">E2</fullName>
    </alternativeName>
    <alternativeName>
        <fullName evidence="2">Peplomer protein</fullName>
    </alternativeName>
    <component>
        <recommendedName>
            <fullName evidence="2">Spike protein S1</fullName>
        </recommendedName>
    </component>
    <component>
        <recommendedName>
            <fullName evidence="2">Spike protein S2</fullName>
        </recommendedName>
    </component>
    <component>
        <recommendedName>
            <fullName evidence="2">Spike protein S2'</fullName>
        </recommendedName>
    </component>
</protein>
<evidence type="ECO:0000250" key="1"/>
<evidence type="ECO:0000255" key="2">
    <source>
        <dbReference type="HAMAP-Rule" id="MF_04099"/>
    </source>
</evidence>
<evidence type="ECO:0000255" key="3">
    <source>
        <dbReference type="PROSITE-ProRule" id="PRU01269"/>
    </source>
</evidence>
<evidence type="ECO:0000255" key="4">
    <source>
        <dbReference type="PROSITE-ProRule" id="PRU01270"/>
    </source>
</evidence>
<gene>
    <name evidence="2" type="primary">S</name>
    <name type="ORF">3</name>
</gene>
<name>SPIKE_CVMJC</name>
<organism>
    <name type="scientific">Murine coronavirus (strain JHMV / variant CL-2)</name>
    <name type="common">MHV</name>
    <name type="synonym">Murine hepatitis virus</name>
    <dbReference type="NCBI Taxonomy" id="33735"/>
    <lineage>
        <taxon>Viruses</taxon>
        <taxon>Riboviria</taxon>
        <taxon>Orthornavirae</taxon>
        <taxon>Pisuviricota</taxon>
        <taxon>Pisoniviricetes</taxon>
        <taxon>Nidovirales</taxon>
        <taxon>Cornidovirineae</taxon>
        <taxon>Coronaviridae</taxon>
        <taxon>Orthocoronavirinae</taxon>
        <taxon>Betacoronavirus</taxon>
        <taxon>Embecovirus</taxon>
        <taxon>Murine coronavirus</taxon>
    </lineage>
</organism>
<comment type="function">
    <molecule>Spike protein S1</molecule>
    <text evidence="2">Attaches the virion to the cell membrane by interacting with host receptor, initiating the infection.</text>
</comment>
<comment type="function">
    <molecule>Spike protein S2</molecule>
    <text evidence="2">Mediates fusion of the virion and cellular membranes by acting as a class I viral fusion protein. Under the current model, the protein has at least three conformational states: pre-fusion native state, pre-hairpin intermediate state, and post-fusion hairpin state. During viral and target cell membrane fusion, the coiled coil regions (heptad repeats) assume a trimer-of-hairpins structure, positioning the fusion peptide in close proximity to the C-terminal region of the ectodomain. The formation of this structure appears to drive apposition and subsequent fusion of viral and target cell membranes.</text>
</comment>
<comment type="function">
    <molecule>Spike protein S2'</molecule>
    <text evidence="2">Acts as a viral fusion peptide which is unmasked following S2 cleavage occurring upon virus endocytosis.</text>
</comment>
<comment type="subunit">
    <text evidence="2">Homotrimer; each monomer consists of a S1 and a S2 subunit. The resulting peplomers protrude from the virus surface as spikes.</text>
</comment>
<comment type="subcellular location">
    <subcellularLocation>
        <location evidence="2">Virion membrane</location>
        <topology evidence="2">Single-pass type I membrane protein</topology>
    </subcellularLocation>
    <subcellularLocation>
        <location evidence="2">Host endoplasmic reticulum-Golgi intermediate compartment membrane</location>
        <topology evidence="2">Single-pass type I membrane protein</topology>
    </subcellularLocation>
    <subcellularLocation>
        <location evidence="2">Host cell membrane</location>
        <topology evidence="2">Single-pass type I membrane protein</topology>
    </subcellularLocation>
    <text evidence="2">Accumulates in the endoplasmic reticulum-Golgi intermediate compartment, where it participates in virus particle assembly. Some S oligomers are transported to the host plasma membrane, where they may mediate cell-cell fusion.</text>
</comment>
<comment type="domain">
    <text evidence="2">Fusion peptide 1 (FP1) and fusion peptide 2 (FP2) function cooperatively and have a membrane-ordering effect on lipid headgroups and shallow hydrophobic regions of target bilayers. They are considered as two domains of an extended, bipartite FP. The membrane-ordering activity is calcium-dependent and also dependent on correct folding, which is maintained by an internal disulfide bond in FP2.</text>
</comment>
<comment type="PTM">
    <text evidence="2">Specific enzymatic cleavages in vivo yield mature proteins. The precursor is processed into S1 and S2 by host cell furin or another cellular protease to yield the mature S1 and S2 proteins. Additionally, a second cleavage leads to the release of a fusion peptide after viral attachment to host cell receptor.</text>
</comment>
<comment type="PTM">
    <text evidence="2">The cytoplasmic Cys-rich domain is palmitoylated. Spike glycoprotein is digested within host endosomes.</text>
</comment>
<comment type="similarity">
    <text evidence="2">Belongs to the betacoronaviruses spike protein family.</text>
</comment>
<dbReference type="EMBL" id="D10235">
    <property type="protein sequence ID" value="BAA01085.1"/>
    <property type="molecule type" value="mRNA"/>
</dbReference>
<dbReference type="PIR" id="JQ1534">
    <property type="entry name" value="JQ1534"/>
</dbReference>
<dbReference type="PDB" id="2ZOK">
    <property type="method" value="X-ray"/>
    <property type="resolution" value="2.10 A"/>
    <property type="chains" value="I/J/K/L=510-518"/>
</dbReference>
<dbReference type="PDB" id="2ZOL">
    <property type="method" value="X-ray"/>
    <property type="resolution" value="2.70 A"/>
    <property type="chains" value="E/F=510-518"/>
</dbReference>
<dbReference type="PDB" id="4PG2">
    <property type="method" value="X-ray"/>
    <property type="resolution" value="2.80 A"/>
    <property type="chains" value="D=510-518"/>
</dbReference>
<dbReference type="PDBsum" id="2ZOK"/>
<dbReference type="PDBsum" id="2ZOL"/>
<dbReference type="PDBsum" id="4PG2"/>
<dbReference type="SMR" id="Q02385"/>
<dbReference type="GlyCosmos" id="Q02385">
    <property type="glycosylation" value="17 sites, No reported glycans"/>
</dbReference>
<dbReference type="EvolutionaryTrace" id="Q02385"/>
<dbReference type="GO" id="GO:0044173">
    <property type="term" value="C:host cell endoplasmic reticulum-Golgi intermediate compartment membrane"/>
    <property type="evidence" value="ECO:0007669"/>
    <property type="project" value="UniProtKB-SubCell"/>
</dbReference>
<dbReference type="GO" id="GO:0020002">
    <property type="term" value="C:host cell plasma membrane"/>
    <property type="evidence" value="ECO:0007669"/>
    <property type="project" value="UniProtKB-SubCell"/>
</dbReference>
<dbReference type="GO" id="GO:0016020">
    <property type="term" value="C:membrane"/>
    <property type="evidence" value="ECO:0007669"/>
    <property type="project" value="UniProtKB-UniRule"/>
</dbReference>
<dbReference type="GO" id="GO:0019031">
    <property type="term" value="C:viral envelope"/>
    <property type="evidence" value="ECO:0007669"/>
    <property type="project" value="UniProtKB-UniRule"/>
</dbReference>
<dbReference type="GO" id="GO:0055036">
    <property type="term" value="C:virion membrane"/>
    <property type="evidence" value="ECO:0007669"/>
    <property type="project" value="UniProtKB-SubCell"/>
</dbReference>
<dbReference type="GO" id="GO:0075509">
    <property type="term" value="P:endocytosis involved in viral entry into host cell"/>
    <property type="evidence" value="ECO:0007669"/>
    <property type="project" value="UniProtKB-UniRule"/>
</dbReference>
<dbReference type="GO" id="GO:0039654">
    <property type="term" value="P:fusion of virus membrane with host endosome membrane"/>
    <property type="evidence" value="ECO:0007669"/>
    <property type="project" value="UniProtKB-UniRule"/>
</dbReference>
<dbReference type="GO" id="GO:0019064">
    <property type="term" value="P:fusion of virus membrane with host plasma membrane"/>
    <property type="evidence" value="ECO:0007669"/>
    <property type="project" value="UniProtKB-UniRule"/>
</dbReference>
<dbReference type="GO" id="GO:0046813">
    <property type="term" value="P:receptor-mediated virion attachment to host cell"/>
    <property type="evidence" value="ECO:0007669"/>
    <property type="project" value="UniProtKB-UniRule"/>
</dbReference>
<dbReference type="CDD" id="cd22380">
    <property type="entry name" value="HKU1-CoV-like_Spike_SD1-2_S1-S2_S2"/>
    <property type="match status" value="1"/>
</dbReference>
<dbReference type="CDD" id="cd21625">
    <property type="entry name" value="MHV-like_Spike_S1_NTD"/>
    <property type="match status" value="1"/>
</dbReference>
<dbReference type="CDD" id="cd21484">
    <property type="entry name" value="MHV-like_Spike_S1_RBD"/>
    <property type="match status" value="1"/>
</dbReference>
<dbReference type="FunFam" id="1.20.5.300:FF:000003">
    <property type="entry name" value="Spike glycoprotein"/>
    <property type="match status" value="1"/>
</dbReference>
<dbReference type="FunFam" id="1.20.5.300:FF:000006">
    <property type="entry name" value="Spike glycoprotein"/>
    <property type="match status" value="1"/>
</dbReference>
<dbReference type="FunFam" id="2.60.120.960:FF:000002">
    <property type="entry name" value="Spike glycoprotein"/>
    <property type="match status" value="1"/>
</dbReference>
<dbReference type="Gene3D" id="1.20.5.300">
    <property type="match status" value="2"/>
</dbReference>
<dbReference type="Gene3D" id="3.30.70.1840">
    <property type="match status" value="1"/>
</dbReference>
<dbReference type="Gene3D" id="2.60.120.960">
    <property type="entry name" value="Spike glycoprotein, N-terminal domain"/>
    <property type="match status" value="1"/>
</dbReference>
<dbReference type="HAMAP" id="MF_04099">
    <property type="entry name" value="BETA_CORONA_SPIKE"/>
    <property type="match status" value="1"/>
</dbReference>
<dbReference type="InterPro" id="IPR032500">
    <property type="entry name" value="bCoV_S1_N"/>
</dbReference>
<dbReference type="InterPro" id="IPR042578">
    <property type="entry name" value="BETA_CORONA_SPIKE"/>
</dbReference>
<dbReference type="InterPro" id="IPR043607">
    <property type="entry name" value="CoV_S1_C"/>
</dbReference>
<dbReference type="InterPro" id="IPR043473">
    <property type="entry name" value="S2_sf_CoV"/>
</dbReference>
<dbReference type="InterPro" id="IPR043002">
    <property type="entry name" value="Spike_N_sf"/>
</dbReference>
<dbReference type="InterPro" id="IPR044339">
    <property type="entry name" value="Spike_S1_NTD_MHV-like"/>
</dbReference>
<dbReference type="InterPro" id="IPR018548">
    <property type="entry name" value="Spike_S1_RBD_bCoV"/>
</dbReference>
<dbReference type="InterPro" id="IPR036326">
    <property type="entry name" value="Spike_S1_RBD_sf_bCoV"/>
</dbReference>
<dbReference type="InterPro" id="IPR002552">
    <property type="entry name" value="Spike_S2_CoV"/>
</dbReference>
<dbReference type="InterPro" id="IPR043614">
    <property type="entry name" value="Spike_S2_CoV_C"/>
</dbReference>
<dbReference type="InterPro" id="IPR044873">
    <property type="entry name" value="Spike_S2_CoV_HR1"/>
</dbReference>
<dbReference type="InterPro" id="IPR044874">
    <property type="entry name" value="Spike_S2_CoV_HR2"/>
</dbReference>
<dbReference type="Pfam" id="PF16451">
    <property type="entry name" value="bCoV_S1_N"/>
    <property type="match status" value="1"/>
</dbReference>
<dbReference type="Pfam" id="PF09408">
    <property type="entry name" value="bCoV_S1_RBD"/>
    <property type="match status" value="1"/>
</dbReference>
<dbReference type="Pfam" id="PF19209">
    <property type="entry name" value="CoV_S1_C"/>
    <property type="match status" value="1"/>
</dbReference>
<dbReference type="Pfam" id="PF01601">
    <property type="entry name" value="CoV_S2"/>
    <property type="match status" value="1"/>
</dbReference>
<dbReference type="Pfam" id="PF19214">
    <property type="entry name" value="CoV_S2_C"/>
    <property type="match status" value="1"/>
</dbReference>
<dbReference type="SUPFAM" id="SSF111474">
    <property type="entry name" value="Coronavirus S2 glycoprotein"/>
    <property type="match status" value="2"/>
</dbReference>
<dbReference type="SUPFAM" id="SSF143587">
    <property type="entry name" value="SARS receptor-binding domain-like"/>
    <property type="match status" value="1"/>
</dbReference>
<dbReference type="PROSITE" id="PS51921">
    <property type="entry name" value="BCOV_S1_CTD"/>
    <property type="match status" value="1"/>
</dbReference>
<dbReference type="PROSITE" id="PS51922">
    <property type="entry name" value="BCOV_S1_NTD"/>
    <property type="match status" value="1"/>
</dbReference>
<dbReference type="PROSITE" id="PS51923">
    <property type="entry name" value="COV_S2_HR1"/>
    <property type="match status" value="1"/>
</dbReference>
<dbReference type="PROSITE" id="PS51924">
    <property type="entry name" value="COV_S2_HR2"/>
    <property type="match status" value="1"/>
</dbReference>
<proteinExistence type="evidence at protein level"/>
<accession>Q02385</accession>